<comment type="function">
    <text evidence="2 3">Together with AlgJ and AlgF, forms an inner membrane complex which probably interacts with the alginate polymerization-transport complex and adds acetyl groups at the O-2 and O-3 positions of mannuronate residues. Acetylation of alginate is important for the architecture of biofilms and increases resistance to opsonic killing in the host.</text>
</comment>
<comment type="pathway">
    <text>Glycan biosynthesis; alginate biosynthesis.</text>
</comment>
<comment type="subcellular location">
    <subcellularLocation>
        <location evidence="4 5">Cell inner membrane</location>
        <topology evidence="4 5">Multi-pass membrane protein</topology>
    </subcellularLocation>
</comment>
<comment type="similarity">
    <text evidence="6">Belongs to the membrane-bound acyltransferase family.</text>
</comment>
<gene>
    <name type="primary">algI</name>
    <name type="ordered locus">PA3548</name>
</gene>
<protein>
    <recommendedName>
        <fullName>Probable alginate O-acetylase AlgI</fullName>
        <ecNumber>2.3.1.-</ecNumber>
    </recommendedName>
    <alternativeName>
        <fullName>Alginate biosynthesis protein AlgI</fullName>
    </alternativeName>
</protein>
<accession>Q51392</accession>
<accession>Q9HY67</accession>
<organism>
    <name type="scientific">Pseudomonas aeruginosa (strain ATCC 15692 / DSM 22644 / CIP 104116 / JCM 14847 / LMG 12228 / 1C / PRS 101 / PAO1)</name>
    <dbReference type="NCBI Taxonomy" id="208964"/>
    <lineage>
        <taxon>Bacteria</taxon>
        <taxon>Pseudomonadati</taxon>
        <taxon>Pseudomonadota</taxon>
        <taxon>Gammaproteobacteria</taxon>
        <taxon>Pseudomonadales</taxon>
        <taxon>Pseudomonadaceae</taxon>
        <taxon>Pseudomonas</taxon>
    </lineage>
</organism>
<name>ALGI_PSEAE</name>
<evidence type="ECO:0000255" key="1"/>
<evidence type="ECO:0000269" key="2">
    <source>
    </source>
</evidence>
<evidence type="ECO:0000269" key="3">
    <source>
    </source>
</evidence>
<evidence type="ECO:0000269" key="4">
    <source>
    </source>
</evidence>
<evidence type="ECO:0000269" key="5">
    <source>
    </source>
</evidence>
<evidence type="ECO:0000305" key="6"/>
<dbReference type="EC" id="2.3.1.-"/>
<dbReference type="EMBL" id="U50202">
    <property type="protein sequence ID" value="AAB09781.1"/>
    <property type="molecule type" value="Genomic_DNA"/>
</dbReference>
<dbReference type="EMBL" id="AE004091">
    <property type="protein sequence ID" value="AAG06936.1"/>
    <property type="molecule type" value="Genomic_DNA"/>
</dbReference>
<dbReference type="PIR" id="A83203">
    <property type="entry name" value="A83203"/>
</dbReference>
<dbReference type="RefSeq" id="NP_252238.1">
    <property type="nucleotide sequence ID" value="NC_002516.2"/>
</dbReference>
<dbReference type="RefSeq" id="WP_003112884.1">
    <property type="nucleotide sequence ID" value="NZ_QZGE01000001.1"/>
</dbReference>
<dbReference type="SMR" id="Q51392"/>
<dbReference type="STRING" id="208964.PA3548"/>
<dbReference type="PaxDb" id="208964-PA3548"/>
<dbReference type="GeneID" id="877959"/>
<dbReference type="KEGG" id="pae:PA3548"/>
<dbReference type="PATRIC" id="fig|208964.12.peg.3713"/>
<dbReference type="PseudoCAP" id="PA3548"/>
<dbReference type="HOGENOM" id="CLU_025255_1_3_6"/>
<dbReference type="InParanoid" id="Q51392"/>
<dbReference type="OrthoDB" id="139172at2"/>
<dbReference type="PhylomeDB" id="Q51392"/>
<dbReference type="BioCyc" id="MetaCyc:MONOMER-19201"/>
<dbReference type="BioCyc" id="PAER208964:G1FZ6-3616-MONOMER"/>
<dbReference type="UniPathway" id="UPA00286"/>
<dbReference type="Proteomes" id="UP000002438">
    <property type="component" value="Chromosome"/>
</dbReference>
<dbReference type="GO" id="GO:0005886">
    <property type="term" value="C:plasma membrane"/>
    <property type="evidence" value="ECO:0007669"/>
    <property type="project" value="UniProtKB-SubCell"/>
</dbReference>
<dbReference type="GO" id="GO:0016746">
    <property type="term" value="F:acyltransferase activity"/>
    <property type="evidence" value="ECO:0000318"/>
    <property type="project" value="GO_Central"/>
</dbReference>
<dbReference type="GO" id="GO:0051979">
    <property type="term" value="P:alginic acid acetylation"/>
    <property type="evidence" value="ECO:0000315"/>
    <property type="project" value="PseudoCAP"/>
</dbReference>
<dbReference type="GO" id="GO:0042121">
    <property type="term" value="P:alginic acid biosynthetic process"/>
    <property type="evidence" value="ECO:0007669"/>
    <property type="project" value="UniProtKB-UniPathway"/>
</dbReference>
<dbReference type="InterPro" id="IPR024194">
    <property type="entry name" value="Ac/AlaTfrase_AlgI/DltB"/>
</dbReference>
<dbReference type="InterPro" id="IPR028362">
    <property type="entry name" value="AlgI"/>
</dbReference>
<dbReference type="InterPro" id="IPR051085">
    <property type="entry name" value="MB_O-acyltransferase"/>
</dbReference>
<dbReference type="InterPro" id="IPR004299">
    <property type="entry name" value="MBOAT_fam"/>
</dbReference>
<dbReference type="PANTHER" id="PTHR13285">
    <property type="entry name" value="ACYLTRANSFERASE"/>
    <property type="match status" value="1"/>
</dbReference>
<dbReference type="PANTHER" id="PTHR13285:SF23">
    <property type="entry name" value="TEICHOIC ACID D-ALANYLTRANSFERASE"/>
    <property type="match status" value="1"/>
</dbReference>
<dbReference type="Pfam" id="PF03062">
    <property type="entry name" value="MBOAT"/>
    <property type="match status" value="1"/>
</dbReference>
<dbReference type="PIRSF" id="PIRSF500217">
    <property type="entry name" value="AlgI"/>
    <property type="match status" value="1"/>
</dbReference>
<dbReference type="PIRSF" id="PIRSF016636">
    <property type="entry name" value="AlgI_DltB"/>
    <property type="match status" value="1"/>
</dbReference>
<proteinExistence type="inferred from homology"/>
<keyword id="KW-0012">Acyltransferase</keyword>
<keyword id="KW-0016">Alginate biosynthesis</keyword>
<keyword id="KW-0997">Cell inner membrane</keyword>
<keyword id="KW-1003">Cell membrane</keyword>
<keyword id="KW-0472">Membrane</keyword>
<keyword id="KW-1185">Reference proteome</keyword>
<keyword id="KW-0808">Transferase</keyword>
<keyword id="KW-0812">Transmembrane</keyword>
<keyword id="KW-1133">Transmembrane helix</keyword>
<reference key="1">
    <citation type="journal article" date="1996" name="J. Bacteriol.">
        <title>Identification of algI and algJ in the Pseudomonas aeruginosa alginate biosynthetic gene cluster which are required for alginate O acetylation.</title>
        <authorList>
            <person name="Franklin M.J."/>
            <person name="Ohman D.E."/>
        </authorList>
    </citation>
    <scope>NUCLEOTIDE SEQUENCE [GENOMIC DNA]</scope>
    <scope>SUBCELLULAR LOCATION</scope>
    <source>
        <strain>FRD1</strain>
    </source>
</reference>
<reference key="2">
    <citation type="journal article" date="2000" name="Nature">
        <title>Complete genome sequence of Pseudomonas aeruginosa PAO1, an opportunistic pathogen.</title>
        <authorList>
            <person name="Stover C.K."/>
            <person name="Pham X.-Q.T."/>
            <person name="Erwin A.L."/>
            <person name="Mizoguchi S.D."/>
            <person name="Warrener P."/>
            <person name="Hickey M.J."/>
            <person name="Brinkman F.S.L."/>
            <person name="Hufnagle W.O."/>
            <person name="Kowalik D.J."/>
            <person name="Lagrou M."/>
            <person name="Garber R.L."/>
            <person name="Goltry L."/>
            <person name="Tolentino E."/>
            <person name="Westbrock-Wadman S."/>
            <person name="Yuan Y."/>
            <person name="Brody L.L."/>
            <person name="Coulter S.N."/>
            <person name="Folger K.R."/>
            <person name="Kas A."/>
            <person name="Larbig K."/>
            <person name="Lim R.M."/>
            <person name="Smith K.A."/>
            <person name="Spencer D.H."/>
            <person name="Wong G.K.-S."/>
            <person name="Wu Z."/>
            <person name="Paulsen I.T."/>
            <person name="Reizer J."/>
            <person name="Saier M.H. Jr."/>
            <person name="Hancock R.E.W."/>
            <person name="Lory S."/>
            <person name="Olson M.V."/>
        </authorList>
    </citation>
    <scope>NUCLEOTIDE SEQUENCE [LARGE SCALE GENOMIC DNA]</scope>
    <source>
        <strain>ATCC 15692 / DSM 22644 / CIP 104116 / JCM 14847 / LMG 12228 / 1C / PRS 101 / PAO1</strain>
    </source>
</reference>
<reference key="3">
    <citation type="journal article" date="2002" name="J. Bacteriol.">
        <title>Mutant analysis and cellular localization of the AlgI, AlgJ, and AlgF proteins required for O acetylation of alginate in Pseudomonas aeruginosa.</title>
        <authorList>
            <person name="Franklin M.J."/>
            <person name="Ohman D.E."/>
        </authorList>
    </citation>
    <scope>SUBCELLULAR LOCATION</scope>
    <source>
        <strain>FRD1</strain>
    </source>
</reference>
<reference key="4">
    <citation type="journal article" date="2001" name="J. Bacteriol.">
        <title>Role of alginate and its O acetylation in formation of Pseudomonas aeruginosa microcolonies and biofilms.</title>
        <authorList>
            <person name="Nivens D.E."/>
            <person name="Ohman D.E."/>
            <person name="Williams J."/>
            <person name="Franklin M.J."/>
        </authorList>
    </citation>
    <scope>ROLE IN BIOFILM FORMATION</scope>
    <source>
        <strain>FRD1</strain>
    </source>
</reference>
<reference key="5">
    <citation type="journal article" date="2001" name="Infect. Immun.">
        <title>Role of alginate O acetylation in resistance of mucoid Pseudomonas aeruginosa to opsonic phagocytosis.</title>
        <authorList>
            <person name="Pier G.B."/>
            <person name="Coleman F."/>
            <person name="Grout M."/>
            <person name="Franklin M."/>
            <person name="Ohman D.E."/>
        </authorList>
    </citation>
    <scope>ROLE IN RESISTANCE TO PHAGOCYTOSIS</scope>
    <source>
        <strain>FRD1</strain>
    </source>
</reference>
<feature type="chain" id="PRO_0000213124" description="Probable alginate O-acetylase AlgI">
    <location>
        <begin position="1"/>
        <end position="520"/>
    </location>
</feature>
<feature type="transmembrane region" description="Helical" evidence="1">
    <location>
        <begin position="7"/>
        <end position="24"/>
    </location>
</feature>
<feature type="transmembrane region" description="Helical" evidence="1">
    <location>
        <begin position="39"/>
        <end position="61"/>
    </location>
</feature>
<feature type="transmembrane region" description="Helical" evidence="1">
    <location>
        <begin position="78"/>
        <end position="100"/>
    </location>
</feature>
<feature type="transmembrane region" description="Helical" evidence="1">
    <location>
        <begin position="115"/>
        <end position="137"/>
    </location>
</feature>
<feature type="transmembrane region" description="Helical" evidence="1">
    <location>
        <begin position="150"/>
        <end position="172"/>
    </location>
</feature>
<feature type="transmembrane region" description="Helical" evidence="1">
    <location>
        <begin position="239"/>
        <end position="261"/>
    </location>
</feature>
<feature type="transmembrane region" description="Helical" evidence="1">
    <location>
        <begin position="311"/>
        <end position="333"/>
    </location>
</feature>
<feature type="transmembrane region" description="Helical" evidence="1">
    <location>
        <begin position="353"/>
        <end position="375"/>
    </location>
</feature>
<feature type="transmembrane region" description="Helical" evidence="1">
    <location>
        <begin position="402"/>
        <end position="424"/>
    </location>
</feature>
<feature type="transmembrane region" description="Helical" evidence="1">
    <location>
        <begin position="483"/>
        <end position="505"/>
    </location>
</feature>
<feature type="active site" evidence="1">
    <location>
        <position position="322"/>
    </location>
</feature>
<feature type="sequence conflict" description="In Ref. 1; AAB09781." evidence="6" ref="1">
    <original>VI</original>
    <variation>AF</variation>
    <location>
        <begin position="360"/>
        <end position="361"/>
    </location>
</feature>
<feature type="sequence conflict" description="In Ref. 1; AAB09781." evidence="6" ref="1">
    <original>N</original>
    <variation>S</variation>
    <location>
        <position position="403"/>
    </location>
</feature>
<sequence>MVFSSNVFLFLFLPVFLGLYYLSGERYRNLLLLIASYVFYAWWRVDFLLLFAGVTVFNYWIGLRIGAAGVRTRAAQRWLILGVVVDLCVLGYFKYANFGVDSLNEIITSFGMQPFVLTHILLPIGISFYTFESISYIIDVYRGDTPATHNLIDFAAFVAIFPHLIAGPVLRFKDLVDQFNHRTHTVDKFAEGCTRFMQGFVKKVFIADTLAALADHCFALQNPTTGDAWLGALAYTAQLYFDFSGYSDMAIGLGLMMGFRFMENFNQPYISQSITEFWRRWHISLSTWLRDYLYISLGGNRGSTFQTYRNLFLTMLLGGLWHGANFTYIIWGAWHGMWLAIERALGVNAAPRVLNPLKWVITFLLVVIGWVIFRAENLQVAWRMYEAMFSFGTWQLSELNRANLTGLQVGTLVLAYLVLAFFGLRQFYNQPLQTKAPKAAANSDEVAADGPASAQPRAPREAAGDPAAIAYSPSGALVYQPSWLSQLPVLATRLALLLLFAASVLKLSAQSYSPFLYFQF</sequence>